<name>KHSE_PROM1</name>
<evidence type="ECO:0000255" key="1">
    <source>
        <dbReference type="HAMAP-Rule" id="MF_00384"/>
    </source>
</evidence>
<gene>
    <name evidence="1" type="primary">thrB</name>
    <name type="ordered locus">NATL1_06511</name>
</gene>
<protein>
    <recommendedName>
        <fullName evidence="1">Homoserine kinase</fullName>
        <shortName evidence="1">HK</shortName>
        <shortName evidence="1">HSK</shortName>
        <ecNumber evidence="1">2.7.1.39</ecNumber>
    </recommendedName>
</protein>
<dbReference type="EC" id="2.7.1.39" evidence="1"/>
<dbReference type="EMBL" id="CP000553">
    <property type="protein sequence ID" value="ABM75213.1"/>
    <property type="molecule type" value="Genomic_DNA"/>
</dbReference>
<dbReference type="RefSeq" id="WP_011823375.1">
    <property type="nucleotide sequence ID" value="NC_008819.1"/>
</dbReference>
<dbReference type="SMR" id="A2C153"/>
<dbReference type="KEGG" id="pme:NATL1_06511"/>
<dbReference type="eggNOG" id="COG0083">
    <property type="taxonomic scope" value="Bacteria"/>
</dbReference>
<dbReference type="HOGENOM" id="CLU_041243_0_2_3"/>
<dbReference type="UniPathway" id="UPA00050">
    <property type="reaction ID" value="UER00064"/>
</dbReference>
<dbReference type="Proteomes" id="UP000002592">
    <property type="component" value="Chromosome"/>
</dbReference>
<dbReference type="GO" id="GO:0005737">
    <property type="term" value="C:cytoplasm"/>
    <property type="evidence" value="ECO:0007669"/>
    <property type="project" value="UniProtKB-SubCell"/>
</dbReference>
<dbReference type="GO" id="GO:0005524">
    <property type="term" value="F:ATP binding"/>
    <property type="evidence" value="ECO:0007669"/>
    <property type="project" value="UniProtKB-UniRule"/>
</dbReference>
<dbReference type="GO" id="GO:0004413">
    <property type="term" value="F:homoserine kinase activity"/>
    <property type="evidence" value="ECO:0007669"/>
    <property type="project" value="UniProtKB-UniRule"/>
</dbReference>
<dbReference type="GO" id="GO:0009088">
    <property type="term" value="P:threonine biosynthetic process"/>
    <property type="evidence" value="ECO:0007669"/>
    <property type="project" value="UniProtKB-UniRule"/>
</dbReference>
<dbReference type="Gene3D" id="3.30.230.10">
    <property type="match status" value="1"/>
</dbReference>
<dbReference type="Gene3D" id="3.30.70.890">
    <property type="entry name" value="GHMP kinase, C-terminal domain"/>
    <property type="match status" value="1"/>
</dbReference>
<dbReference type="HAMAP" id="MF_00384">
    <property type="entry name" value="Homoser_kinase"/>
    <property type="match status" value="1"/>
</dbReference>
<dbReference type="InterPro" id="IPR013750">
    <property type="entry name" value="GHMP_kinase_C_dom"/>
</dbReference>
<dbReference type="InterPro" id="IPR036554">
    <property type="entry name" value="GHMP_kinase_C_sf"/>
</dbReference>
<dbReference type="InterPro" id="IPR006204">
    <property type="entry name" value="GHMP_kinase_N_dom"/>
</dbReference>
<dbReference type="InterPro" id="IPR006203">
    <property type="entry name" value="GHMP_knse_ATP-bd_CS"/>
</dbReference>
<dbReference type="InterPro" id="IPR000870">
    <property type="entry name" value="Homoserine_kinase"/>
</dbReference>
<dbReference type="InterPro" id="IPR020568">
    <property type="entry name" value="Ribosomal_Su5_D2-typ_SF"/>
</dbReference>
<dbReference type="InterPro" id="IPR014721">
    <property type="entry name" value="Ribsml_uS5_D2-typ_fold_subgr"/>
</dbReference>
<dbReference type="NCBIfam" id="NF002288">
    <property type="entry name" value="PRK01212.1-4"/>
    <property type="match status" value="1"/>
</dbReference>
<dbReference type="NCBIfam" id="TIGR00191">
    <property type="entry name" value="thrB"/>
    <property type="match status" value="1"/>
</dbReference>
<dbReference type="PANTHER" id="PTHR20861:SF1">
    <property type="entry name" value="HOMOSERINE KINASE"/>
    <property type="match status" value="1"/>
</dbReference>
<dbReference type="PANTHER" id="PTHR20861">
    <property type="entry name" value="HOMOSERINE/4-DIPHOSPHOCYTIDYL-2-C-METHYL-D-ERYTHRITOL KINASE"/>
    <property type="match status" value="1"/>
</dbReference>
<dbReference type="Pfam" id="PF08544">
    <property type="entry name" value="GHMP_kinases_C"/>
    <property type="match status" value="1"/>
</dbReference>
<dbReference type="Pfam" id="PF00288">
    <property type="entry name" value="GHMP_kinases_N"/>
    <property type="match status" value="1"/>
</dbReference>
<dbReference type="PIRSF" id="PIRSF000676">
    <property type="entry name" value="Homoser_kin"/>
    <property type="match status" value="1"/>
</dbReference>
<dbReference type="PRINTS" id="PR00958">
    <property type="entry name" value="HOMSERKINASE"/>
</dbReference>
<dbReference type="SUPFAM" id="SSF55060">
    <property type="entry name" value="GHMP Kinase, C-terminal domain"/>
    <property type="match status" value="1"/>
</dbReference>
<dbReference type="SUPFAM" id="SSF54211">
    <property type="entry name" value="Ribosomal protein S5 domain 2-like"/>
    <property type="match status" value="1"/>
</dbReference>
<dbReference type="PROSITE" id="PS00627">
    <property type="entry name" value="GHMP_KINASES_ATP"/>
    <property type="match status" value="1"/>
</dbReference>
<sequence>MGPPKIGQTVVVEVPSTTANIGPGFDCLGAALDLSNQFTIKRIEGNAERFELIMESTEGNHLRGGPENLFYRAAQRVWRTAGVEPVALEARVKLAVPPARGLGSSATAIVAGLVGANALAGYPLPKEKLLELAIDIEGHPDNVVPSLIGGLCVTAKTATDRWRVVRCDWDQSIKAVVAIPSIRLSTSEARRVMPENIPVNDAVINLGALTLLLQGLRTGNEDLIADGMHDKLHEPYRWGLIKGGLEVREAAKAAGALGCAISGAGPSILALCKATKGREVSVAMVKAWEAAGVASRAPLMSLQLTGSECISNTFG</sequence>
<feature type="chain" id="PRO_1000049156" description="Homoserine kinase">
    <location>
        <begin position="1"/>
        <end position="315"/>
    </location>
</feature>
<feature type="binding site" evidence="1">
    <location>
        <begin position="97"/>
        <end position="107"/>
    </location>
    <ligand>
        <name>ATP</name>
        <dbReference type="ChEBI" id="CHEBI:30616"/>
    </ligand>
</feature>
<proteinExistence type="inferred from homology"/>
<organism>
    <name type="scientific">Prochlorococcus marinus (strain NATL1A)</name>
    <dbReference type="NCBI Taxonomy" id="167555"/>
    <lineage>
        <taxon>Bacteria</taxon>
        <taxon>Bacillati</taxon>
        <taxon>Cyanobacteriota</taxon>
        <taxon>Cyanophyceae</taxon>
        <taxon>Synechococcales</taxon>
        <taxon>Prochlorococcaceae</taxon>
        <taxon>Prochlorococcus</taxon>
    </lineage>
</organism>
<comment type="function">
    <text evidence="1">Catalyzes the ATP-dependent phosphorylation of L-homoserine to L-homoserine phosphate.</text>
</comment>
<comment type="catalytic activity">
    <reaction evidence="1">
        <text>L-homoserine + ATP = O-phospho-L-homoserine + ADP + H(+)</text>
        <dbReference type="Rhea" id="RHEA:13985"/>
        <dbReference type="ChEBI" id="CHEBI:15378"/>
        <dbReference type="ChEBI" id="CHEBI:30616"/>
        <dbReference type="ChEBI" id="CHEBI:57476"/>
        <dbReference type="ChEBI" id="CHEBI:57590"/>
        <dbReference type="ChEBI" id="CHEBI:456216"/>
        <dbReference type="EC" id="2.7.1.39"/>
    </reaction>
</comment>
<comment type="pathway">
    <text evidence="1">Amino-acid biosynthesis; L-threonine biosynthesis; L-threonine from L-aspartate: step 4/5.</text>
</comment>
<comment type="subcellular location">
    <subcellularLocation>
        <location evidence="1">Cytoplasm</location>
    </subcellularLocation>
</comment>
<comment type="similarity">
    <text evidence="1">Belongs to the GHMP kinase family. Homoserine kinase subfamily.</text>
</comment>
<accession>A2C153</accession>
<keyword id="KW-0028">Amino-acid biosynthesis</keyword>
<keyword id="KW-0067">ATP-binding</keyword>
<keyword id="KW-0963">Cytoplasm</keyword>
<keyword id="KW-0418">Kinase</keyword>
<keyword id="KW-0547">Nucleotide-binding</keyword>
<keyword id="KW-0791">Threonine biosynthesis</keyword>
<keyword id="KW-0808">Transferase</keyword>
<reference key="1">
    <citation type="journal article" date="2007" name="PLoS Genet.">
        <title>Patterns and implications of gene gain and loss in the evolution of Prochlorococcus.</title>
        <authorList>
            <person name="Kettler G.C."/>
            <person name="Martiny A.C."/>
            <person name="Huang K."/>
            <person name="Zucker J."/>
            <person name="Coleman M.L."/>
            <person name="Rodrigue S."/>
            <person name="Chen F."/>
            <person name="Lapidus A."/>
            <person name="Ferriera S."/>
            <person name="Johnson J."/>
            <person name="Steglich C."/>
            <person name="Church G.M."/>
            <person name="Richardson P."/>
            <person name="Chisholm S.W."/>
        </authorList>
    </citation>
    <scope>NUCLEOTIDE SEQUENCE [LARGE SCALE GENOMIC DNA]</scope>
    <source>
        <strain>NATL1A</strain>
    </source>
</reference>